<gene>
    <name type="primary">Kr</name>
</gene>
<proteinExistence type="inferred from homology"/>
<evidence type="ECO:0000255" key="1">
    <source>
        <dbReference type="PROSITE-ProRule" id="PRU00042"/>
    </source>
</evidence>
<evidence type="ECO:0000305" key="2"/>
<accession>Q01793</accession>
<protein>
    <recommendedName>
        <fullName>Protein krueppel</fullName>
    </recommendedName>
</protein>
<reference key="1">
    <citation type="journal article" date="1992" name="Proc. Natl. Acad. Sci. U.S.A.">
        <title>Evolutionary conservation pattern of zinc-finger domains of Drosophila segmentation genes.</title>
        <authorList>
            <person name="Sommer R.J."/>
            <person name="Retzlaff M."/>
            <person name="Goerlich K."/>
            <person name="Sander K."/>
            <person name="Tautz D."/>
        </authorList>
    </citation>
    <scope>NUCLEOTIDE SEQUENCE [GENOMIC DNA]</scope>
</reference>
<comment type="function">
    <text>Krueppel is a gap class segmentation protein.</text>
</comment>
<comment type="subcellular location">
    <subcellularLocation>
        <location evidence="2">Nucleus</location>
    </subcellularLocation>
</comment>
<comment type="similarity">
    <text evidence="2">Belongs to the krueppel C2H2-type zinc-finger protein family.</text>
</comment>
<sequence>ERTHTGEKPFECQECHKRFTRDHHLKTHMRLHTGERPYRCEHCDRQFVQVANLRRHLRVHTGERPYGCEHCSMK</sequence>
<feature type="chain" id="PRO_0000047002" description="Protein krueppel">
    <location>
        <begin position="1" status="less than"/>
        <end position="74" status="greater than"/>
    </location>
</feature>
<feature type="zinc finger region" description="C2H2-type 1" evidence="1">
    <location>
        <begin position="1" status="less than"/>
        <end position="4"/>
    </location>
</feature>
<feature type="zinc finger region" description="C2H2-type 2" evidence="1">
    <location>
        <begin position="10"/>
        <end position="32"/>
    </location>
</feature>
<feature type="zinc finger region" description="C2H2-type 3" evidence="1">
    <location>
        <begin position="38"/>
        <end position="60"/>
    </location>
</feature>
<feature type="zinc finger region" description="C2H2-type 4" evidence="1">
    <location>
        <begin position="66"/>
        <end position="74" status="greater than"/>
    </location>
</feature>
<feature type="non-terminal residue">
    <location>
        <position position="1"/>
    </location>
</feature>
<feature type="non-terminal residue">
    <location>
        <position position="74"/>
    </location>
</feature>
<keyword id="KW-0217">Developmental protein</keyword>
<keyword id="KW-0238">DNA-binding</keyword>
<keyword id="KW-0302">Gap protein</keyword>
<keyword id="KW-0479">Metal-binding</keyword>
<keyword id="KW-0539">Nucleus</keyword>
<keyword id="KW-0677">Repeat</keyword>
<keyword id="KW-0862">Zinc</keyword>
<keyword id="KW-0863">Zinc-finger</keyword>
<organism>
    <name type="scientific">Tribolium castaneum</name>
    <name type="common">Red flour beetle</name>
    <dbReference type="NCBI Taxonomy" id="7070"/>
    <lineage>
        <taxon>Eukaryota</taxon>
        <taxon>Metazoa</taxon>
        <taxon>Ecdysozoa</taxon>
        <taxon>Arthropoda</taxon>
        <taxon>Hexapoda</taxon>
        <taxon>Insecta</taxon>
        <taxon>Pterygota</taxon>
        <taxon>Neoptera</taxon>
        <taxon>Endopterygota</taxon>
        <taxon>Coleoptera</taxon>
        <taxon>Polyphaga</taxon>
        <taxon>Cucujiformia</taxon>
        <taxon>Tenebrionidae</taxon>
        <taxon>Tenebrionidae incertae sedis</taxon>
        <taxon>Tribolium</taxon>
    </lineage>
</organism>
<dbReference type="EMBL" id="L01616">
    <property type="protein sequence ID" value="AAA30096.1"/>
    <property type="molecule type" value="Genomic_DNA"/>
</dbReference>
<dbReference type="SMR" id="Q01793"/>
<dbReference type="eggNOG" id="KOG1721">
    <property type="taxonomic scope" value="Eukaryota"/>
</dbReference>
<dbReference type="HOGENOM" id="CLU_056241_0_0_1"/>
<dbReference type="OrthoDB" id="654211at2759"/>
<dbReference type="GO" id="GO:0005634">
    <property type="term" value="C:nucleus"/>
    <property type="evidence" value="ECO:0007669"/>
    <property type="project" value="UniProtKB-SubCell"/>
</dbReference>
<dbReference type="GO" id="GO:0003677">
    <property type="term" value="F:DNA binding"/>
    <property type="evidence" value="ECO:0007669"/>
    <property type="project" value="UniProtKB-KW"/>
</dbReference>
<dbReference type="GO" id="GO:0008270">
    <property type="term" value="F:zinc ion binding"/>
    <property type="evidence" value="ECO:0007669"/>
    <property type="project" value="UniProtKB-KW"/>
</dbReference>
<dbReference type="GO" id="GO:0035282">
    <property type="term" value="P:segmentation"/>
    <property type="evidence" value="ECO:0007669"/>
    <property type="project" value="UniProtKB-KW"/>
</dbReference>
<dbReference type="FunFam" id="3.30.160.60:FF:000912">
    <property type="entry name" value="Zinc finger protein 660"/>
    <property type="match status" value="2"/>
</dbReference>
<dbReference type="Gene3D" id="3.30.160.60">
    <property type="entry name" value="Classic Zinc Finger"/>
    <property type="match status" value="2"/>
</dbReference>
<dbReference type="InterPro" id="IPR050331">
    <property type="entry name" value="Zinc_finger"/>
</dbReference>
<dbReference type="InterPro" id="IPR036236">
    <property type="entry name" value="Znf_C2H2_sf"/>
</dbReference>
<dbReference type="InterPro" id="IPR013087">
    <property type="entry name" value="Znf_C2H2_type"/>
</dbReference>
<dbReference type="PANTHER" id="PTHR16515">
    <property type="entry name" value="PR DOMAIN ZINC FINGER PROTEIN"/>
    <property type="match status" value="1"/>
</dbReference>
<dbReference type="PANTHER" id="PTHR16515:SF57">
    <property type="entry name" value="ZINC FINGER PROTEIN 154-LIKE"/>
    <property type="match status" value="1"/>
</dbReference>
<dbReference type="Pfam" id="PF00096">
    <property type="entry name" value="zf-C2H2"/>
    <property type="match status" value="2"/>
</dbReference>
<dbReference type="SMART" id="SM00355">
    <property type="entry name" value="ZnF_C2H2"/>
    <property type="match status" value="2"/>
</dbReference>
<dbReference type="SUPFAM" id="SSF57667">
    <property type="entry name" value="beta-beta-alpha zinc fingers"/>
    <property type="match status" value="1"/>
</dbReference>
<dbReference type="PROSITE" id="PS00028">
    <property type="entry name" value="ZINC_FINGER_C2H2_1"/>
    <property type="match status" value="2"/>
</dbReference>
<dbReference type="PROSITE" id="PS50157">
    <property type="entry name" value="ZINC_FINGER_C2H2_2"/>
    <property type="match status" value="2"/>
</dbReference>
<name>KRUP_TRICA</name>